<comment type="function">
    <text evidence="1">Catalyzes a salvage reaction resulting in the formation of AMP, that is energically less costly than de novo synthesis.</text>
</comment>
<comment type="catalytic activity">
    <reaction evidence="1">
        <text>AMP + diphosphate = 5-phospho-alpha-D-ribose 1-diphosphate + adenine</text>
        <dbReference type="Rhea" id="RHEA:16609"/>
        <dbReference type="ChEBI" id="CHEBI:16708"/>
        <dbReference type="ChEBI" id="CHEBI:33019"/>
        <dbReference type="ChEBI" id="CHEBI:58017"/>
        <dbReference type="ChEBI" id="CHEBI:456215"/>
        <dbReference type="EC" id="2.4.2.7"/>
    </reaction>
</comment>
<comment type="pathway">
    <text evidence="1">Purine metabolism; AMP biosynthesis via salvage pathway; AMP from adenine: step 1/1.</text>
</comment>
<comment type="subunit">
    <text evidence="1">Homodimer.</text>
</comment>
<comment type="subcellular location">
    <subcellularLocation>
        <location evidence="1">Cytoplasm</location>
    </subcellularLocation>
</comment>
<comment type="similarity">
    <text evidence="1">Belongs to the purine/pyrimidine phosphoribosyltransferase family.</text>
</comment>
<protein>
    <recommendedName>
        <fullName evidence="1">Adenine phosphoribosyltransferase</fullName>
        <shortName evidence="1">APRT</shortName>
        <ecNumber evidence="1">2.4.2.7</ecNumber>
    </recommendedName>
</protein>
<proteinExistence type="inferred from homology"/>
<sequence length="172" mass="18705">MKLEDYIATIENYPKEGVTFRDISPLMADGNAYSYAIREIVQYATDKKIDMIVGPEARGFIVGCPVAFELGIGFAPVRKPGKLPRKVISVDYEKEYGVDTLCMHADAIKPGQRVLIVDDLLATGGTVKATIEMIERLGGVVAGCAFLIELDGLNGREAIEGYDAKVLMNFPG</sequence>
<reference key="1">
    <citation type="journal article" date="2006" name="Proc. Natl. Acad. Sci. U.S.A.">
        <title>Comparative genomics of the lactic acid bacteria.</title>
        <authorList>
            <person name="Makarova K.S."/>
            <person name="Slesarev A."/>
            <person name="Wolf Y.I."/>
            <person name="Sorokin A."/>
            <person name="Mirkin B."/>
            <person name="Koonin E.V."/>
            <person name="Pavlov A."/>
            <person name="Pavlova N."/>
            <person name="Karamychev V."/>
            <person name="Polouchine N."/>
            <person name="Shakhova V."/>
            <person name="Grigoriev I."/>
            <person name="Lou Y."/>
            <person name="Rohksar D."/>
            <person name="Lucas S."/>
            <person name="Huang K."/>
            <person name="Goodstein D.M."/>
            <person name="Hawkins T."/>
            <person name="Plengvidhya V."/>
            <person name="Welker D."/>
            <person name="Hughes J."/>
            <person name="Goh Y."/>
            <person name="Benson A."/>
            <person name="Baldwin K."/>
            <person name="Lee J.-H."/>
            <person name="Diaz-Muniz I."/>
            <person name="Dosti B."/>
            <person name="Smeianov V."/>
            <person name="Wechter W."/>
            <person name="Barabote R."/>
            <person name="Lorca G."/>
            <person name="Altermann E."/>
            <person name="Barrangou R."/>
            <person name="Ganesan B."/>
            <person name="Xie Y."/>
            <person name="Rawsthorne H."/>
            <person name="Tamir D."/>
            <person name="Parker C."/>
            <person name="Breidt F."/>
            <person name="Broadbent J.R."/>
            <person name="Hutkins R."/>
            <person name="O'Sullivan D."/>
            <person name="Steele J."/>
            <person name="Unlu G."/>
            <person name="Saier M.H. Jr."/>
            <person name="Klaenhammer T."/>
            <person name="Richardson P."/>
            <person name="Kozyavkin S."/>
            <person name="Weimer B.C."/>
            <person name="Mills D.A."/>
        </authorList>
    </citation>
    <scope>NUCLEOTIDE SEQUENCE [LARGE SCALE GENOMIC DNA]</scope>
    <source>
        <strain>ATCC BAA-491 / LMD-9</strain>
    </source>
</reference>
<accession>Q03K92</accession>
<keyword id="KW-0963">Cytoplasm</keyword>
<keyword id="KW-0328">Glycosyltransferase</keyword>
<keyword id="KW-0660">Purine salvage</keyword>
<keyword id="KW-0808">Transferase</keyword>
<gene>
    <name evidence="1" type="primary">apt</name>
    <name type="ordered locus">STER_1190</name>
</gene>
<feature type="chain" id="PRO_1000000361" description="Adenine phosphoribosyltransferase">
    <location>
        <begin position="1"/>
        <end position="172"/>
    </location>
</feature>
<evidence type="ECO:0000255" key="1">
    <source>
        <dbReference type="HAMAP-Rule" id="MF_00004"/>
    </source>
</evidence>
<dbReference type="EC" id="2.4.2.7" evidence="1"/>
<dbReference type="EMBL" id="CP000419">
    <property type="protein sequence ID" value="ABJ66380.1"/>
    <property type="molecule type" value="Genomic_DNA"/>
</dbReference>
<dbReference type="RefSeq" id="WP_002947203.1">
    <property type="nucleotide sequence ID" value="NZ_CP086001.1"/>
</dbReference>
<dbReference type="SMR" id="Q03K92"/>
<dbReference type="KEGG" id="ste:STER_1190"/>
<dbReference type="HOGENOM" id="CLU_063339_3_0_9"/>
<dbReference type="UniPathway" id="UPA00588">
    <property type="reaction ID" value="UER00646"/>
</dbReference>
<dbReference type="GO" id="GO:0005737">
    <property type="term" value="C:cytoplasm"/>
    <property type="evidence" value="ECO:0007669"/>
    <property type="project" value="UniProtKB-SubCell"/>
</dbReference>
<dbReference type="GO" id="GO:0002055">
    <property type="term" value="F:adenine binding"/>
    <property type="evidence" value="ECO:0007669"/>
    <property type="project" value="TreeGrafter"/>
</dbReference>
<dbReference type="GO" id="GO:0003999">
    <property type="term" value="F:adenine phosphoribosyltransferase activity"/>
    <property type="evidence" value="ECO:0007669"/>
    <property type="project" value="UniProtKB-UniRule"/>
</dbReference>
<dbReference type="GO" id="GO:0016208">
    <property type="term" value="F:AMP binding"/>
    <property type="evidence" value="ECO:0007669"/>
    <property type="project" value="TreeGrafter"/>
</dbReference>
<dbReference type="GO" id="GO:0006168">
    <property type="term" value="P:adenine salvage"/>
    <property type="evidence" value="ECO:0007669"/>
    <property type="project" value="InterPro"/>
</dbReference>
<dbReference type="GO" id="GO:0044209">
    <property type="term" value="P:AMP salvage"/>
    <property type="evidence" value="ECO:0007669"/>
    <property type="project" value="UniProtKB-UniRule"/>
</dbReference>
<dbReference type="GO" id="GO:0006166">
    <property type="term" value="P:purine ribonucleoside salvage"/>
    <property type="evidence" value="ECO:0007669"/>
    <property type="project" value="UniProtKB-KW"/>
</dbReference>
<dbReference type="CDD" id="cd06223">
    <property type="entry name" value="PRTases_typeI"/>
    <property type="match status" value="1"/>
</dbReference>
<dbReference type="FunFam" id="3.40.50.2020:FF:000004">
    <property type="entry name" value="Adenine phosphoribosyltransferase"/>
    <property type="match status" value="1"/>
</dbReference>
<dbReference type="Gene3D" id="3.40.50.2020">
    <property type="match status" value="1"/>
</dbReference>
<dbReference type="HAMAP" id="MF_00004">
    <property type="entry name" value="Aden_phosphoribosyltr"/>
    <property type="match status" value="1"/>
</dbReference>
<dbReference type="InterPro" id="IPR005764">
    <property type="entry name" value="Ade_phspho_trans"/>
</dbReference>
<dbReference type="InterPro" id="IPR000836">
    <property type="entry name" value="PRibTrfase_dom"/>
</dbReference>
<dbReference type="InterPro" id="IPR029057">
    <property type="entry name" value="PRTase-like"/>
</dbReference>
<dbReference type="InterPro" id="IPR050054">
    <property type="entry name" value="UPRTase/APRTase"/>
</dbReference>
<dbReference type="NCBIfam" id="TIGR01090">
    <property type="entry name" value="apt"/>
    <property type="match status" value="1"/>
</dbReference>
<dbReference type="NCBIfam" id="NF002633">
    <property type="entry name" value="PRK02304.1-2"/>
    <property type="match status" value="1"/>
</dbReference>
<dbReference type="NCBIfam" id="NF002634">
    <property type="entry name" value="PRK02304.1-3"/>
    <property type="match status" value="1"/>
</dbReference>
<dbReference type="NCBIfam" id="NF002636">
    <property type="entry name" value="PRK02304.1-5"/>
    <property type="match status" value="1"/>
</dbReference>
<dbReference type="PANTHER" id="PTHR32315">
    <property type="entry name" value="ADENINE PHOSPHORIBOSYLTRANSFERASE"/>
    <property type="match status" value="1"/>
</dbReference>
<dbReference type="PANTHER" id="PTHR32315:SF3">
    <property type="entry name" value="ADENINE PHOSPHORIBOSYLTRANSFERASE"/>
    <property type="match status" value="1"/>
</dbReference>
<dbReference type="Pfam" id="PF00156">
    <property type="entry name" value="Pribosyltran"/>
    <property type="match status" value="1"/>
</dbReference>
<dbReference type="SUPFAM" id="SSF53271">
    <property type="entry name" value="PRTase-like"/>
    <property type="match status" value="1"/>
</dbReference>
<dbReference type="PROSITE" id="PS00103">
    <property type="entry name" value="PUR_PYR_PR_TRANSFER"/>
    <property type="match status" value="1"/>
</dbReference>
<organism>
    <name type="scientific">Streptococcus thermophilus (strain ATCC BAA-491 / LMD-9)</name>
    <dbReference type="NCBI Taxonomy" id="322159"/>
    <lineage>
        <taxon>Bacteria</taxon>
        <taxon>Bacillati</taxon>
        <taxon>Bacillota</taxon>
        <taxon>Bacilli</taxon>
        <taxon>Lactobacillales</taxon>
        <taxon>Streptococcaceae</taxon>
        <taxon>Streptococcus</taxon>
    </lineage>
</organism>
<name>APT_STRTD</name>